<dbReference type="EMBL" id="AF281154">
    <property type="protein sequence ID" value="AAG44842.1"/>
    <property type="molecule type" value="mRNA"/>
</dbReference>
<dbReference type="EMBL" id="AF400126">
    <property type="protein sequence ID" value="AAL62057.1"/>
    <property type="molecule type" value="mRNA"/>
</dbReference>
<dbReference type="EMBL" id="AF400127">
    <property type="protein sequence ID" value="AAL62058.1"/>
    <property type="molecule type" value="mRNA"/>
</dbReference>
<dbReference type="EMBL" id="AB011477">
    <property type="protein sequence ID" value="BAB11346.1"/>
    <property type="status" value="ALT_SEQ"/>
    <property type="molecule type" value="Genomic_DNA"/>
</dbReference>
<dbReference type="EMBL" id="CP002688">
    <property type="protein sequence ID" value="AED94602.1"/>
    <property type="molecule type" value="Genomic_DNA"/>
</dbReference>
<dbReference type="EMBL" id="CP002688">
    <property type="protein sequence ID" value="AED94603.1"/>
    <property type="molecule type" value="Genomic_DNA"/>
</dbReference>
<dbReference type="RefSeq" id="NP_568586.2">
    <molecule id="Q9FQ20-1"/>
    <property type="nucleotide sequence ID" value="NM_123449.3"/>
</dbReference>
<dbReference type="RefSeq" id="NP_851110.1">
    <molecule id="Q9FQ20-2"/>
    <property type="nucleotide sequence ID" value="NM_180779.2"/>
</dbReference>
<dbReference type="SMR" id="Q9FQ20"/>
<dbReference type="FunCoup" id="Q9FQ20">
    <property type="interactions" value="2295"/>
</dbReference>
<dbReference type="STRING" id="3702.Q9FQ20"/>
<dbReference type="GlyGen" id="Q9FQ20">
    <property type="glycosylation" value="1 site"/>
</dbReference>
<dbReference type="iPTMnet" id="Q9FQ20"/>
<dbReference type="PaxDb" id="3702-AT5G40840.2"/>
<dbReference type="ProteomicsDB" id="232691">
    <molecule id="Q9FQ20-1"/>
</dbReference>
<dbReference type="EnsemblPlants" id="AT5G40840.1">
    <molecule id="Q9FQ20-2"/>
    <property type="protein sequence ID" value="AT5G40840.1"/>
    <property type="gene ID" value="AT5G40840"/>
</dbReference>
<dbReference type="EnsemblPlants" id="AT5G40840.2">
    <molecule id="Q9FQ20-1"/>
    <property type="protein sequence ID" value="AT5G40840.2"/>
    <property type="gene ID" value="AT5G40840"/>
</dbReference>
<dbReference type="GeneID" id="834084"/>
<dbReference type="Gramene" id="AT5G40840.1">
    <molecule id="Q9FQ20-2"/>
    <property type="protein sequence ID" value="AT5G40840.1"/>
    <property type="gene ID" value="AT5G40840"/>
</dbReference>
<dbReference type="Gramene" id="AT5G40840.2">
    <molecule id="Q9FQ20-1"/>
    <property type="protein sequence ID" value="AT5G40840.2"/>
    <property type="gene ID" value="AT5G40840"/>
</dbReference>
<dbReference type="KEGG" id="ath:AT5G40840"/>
<dbReference type="Araport" id="AT5G40840"/>
<dbReference type="TAIR" id="AT5G40840">
    <property type="gene designation" value="SYN2"/>
</dbReference>
<dbReference type="eggNOG" id="KOG1213">
    <property type="taxonomic scope" value="Eukaryota"/>
</dbReference>
<dbReference type="HOGENOM" id="CLU_015577_0_0_1"/>
<dbReference type="InParanoid" id="Q9FQ20"/>
<dbReference type="OMA" id="MTCSYAD"/>
<dbReference type="PhylomeDB" id="Q9FQ20"/>
<dbReference type="PRO" id="PR:Q9FQ20"/>
<dbReference type="Proteomes" id="UP000006548">
    <property type="component" value="Chromosome 5"/>
</dbReference>
<dbReference type="ExpressionAtlas" id="Q9FQ20">
    <property type="expression patterns" value="baseline and differential"/>
</dbReference>
<dbReference type="GO" id="GO:0008278">
    <property type="term" value="C:cohesin complex"/>
    <property type="evidence" value="ECO:0007669"/>
    <property type="project" value="InterPro"/>
</dbReference>
<dbReference type="GO" id="GO:0005634">
    <property type="term" value="C:nucleus"/>
    <property type="evidence" value="ECO:0000250"/>
    <property type="project" value="TAIR"/>
</dbReference>
<dbReference type="GO" id="GO:0051301">
    <property type="term" value="P:cell division"/>
    <property type="evidence" value="ECO:0007669"/>
    <property type="project" value="UniProtKB-KW"/>
</dbReference>
<dbReference type="GO" id="GO:0007059">
    <property type="term" value="P:chromosome segregation"/>
    <property type="evidence" value="ECO:0007669"/>
    <property type="project" value="UniProtKB-KW"/>
</dbReference>
<dbReference type="GO" id="GO:0006302">
    <property type="term" value="P:double-strand break repair"/>
    <property type="evidence" value="ECO:0000315"/>
    <property type="project" value="TAIR"/>
</dbReference>
<dbReference type="GO" id="GO:0000278">
    <property type="term" value="P:mitotic cell cycle"/>
    <property type="evidence" value="ECO:0000270"/>
    <property type="project" value="TAIR"/>
</dbReference>
<dbReference type="GO" id="GO:0007062">
    <property type="term" value="P:sister chromatid cohesion"/>
    <property type="evidence" value="ECO:0007669"/>
    <property type="project" value="InterPro"/>
</dbReference>
<dbReference type="CDD" id="cd21793">
    <property type="entry name" value="Rad21_Rec8_M_AtSYN1-like"/>
    <property type="match status" value="1"/>
</dbReference>
<dbReference type="FunFam" id="1.10.10.580:FF:000002">
    <property type="entry name" value="Sister chromatid cohesion 1 protein 4"/>
    <property type="match status" value="1"/>
</dbReference>
<dbReference type="Gene3D" id="1.10.10.580">
    <property type="entry name" value="Structural maintenance of chromosome 1. Chain E"/>
    <property type="match status" value="1"/>
</dbReference>
<dbReference type="InterPro" id="IPR039781">
    <property type="entry name" value="Rad21/Rec8-like"/>
</dbReference>
<dbReference type="InterPro" id="IPR006909">
    <property type="entry name" value="Rad21/Rec8_C_eu"/>
</dbReference>
<dbReference type="InterPro" id="IPR006910">
    <property type="entry name" value="Rad21_Rec8_N"/>
</dbReference>
<dbReference type="InterPro" id="IPR023093">
    <property type="entry name" value="ScpA-like_C"/>
</dbReference>
<dbReference type="InterPro" id="IPR036390">
    <property type="entry name" value="WH_DNA-bd_sf"/>
</dbReference>
<dbReference type="PANTHER" id="PTHR12585">
    <property type="entry name" value="SCC1 / RAD21 FAMILY MEMBER"/>
    <property type="match status" value="1"/>
</dbReference>
<dbReference type="PANTHER" id="PTHR12585:SF73">
    <property type="entry name" value="SISTER CHROMATID COHESION 1 PROTEIN 2"/>
    <property type="match status" value="1"/>
</dbReference>
<dbReference type="Pfam" id="PF04824">
    <property type="entry name" value="Rad21_Rec8"/>
    <property type="match status" value="1"/>
</dbReference>
<dbReference type="Pfam" id="PF04825">
    <property type="entry name" value="Rad21_Rec8_N"/>
    <property type="match status" value="1"/>
</dbReference>
<dbReference type="SUPFAM" id="SSF46785">
    <property type="entry name" value="Winged helix' DNA-binding domain"/>
    <property type="match status" value="1"/>
</dbReference>
<protein>
    <recommendedName>
        <fullName>Sister chromatid cohesion 1 protein 2</fullName>
    </recommendedName>
    <alternativeName>
        <fullName>SCC1 homolog 2</fullName>
        <shortName>AtRAD21-1</shortName>
    </alternativeName>
</protein>
<proteinExistence type="evidence at transcript level"/>
<evidence type="ECO:0000250" key="1"/>
<evidence type="ECO:0000256" key="2">
    <source>
        <dbReference type="SAM" id="MobiDB-lite"/>
    </source>
</evidence>
<evidence type="ECO:0000303" key="3">
    <source>
    </source>
</evidence>
<evidence type="ECO:0000303" key="4">
    <source ref="2"/>
</evidence>
<evidence type="ECO:0000305" key="5"/>
<accession>Q9FQ20</accession>
<accession>Q8W1Y1</accession>
<accession>Q8W1Y2</accession>
<accession>Q9FKS2</accession>
<organism>
    <name type="scientific">Arabidopsis thaliana</name>
    <name type="common">Mouse-ear cress</name>
    <dbReference type="NCBI Taxonomy" id="3702"/>
    <lineage>
        <taxon>Eukaryota</taxon>
        <taxon>Viridiplantae</taxon>
        <taxon>Streptophyta</taxon>
        <taxon>Embryophyta</taxon>
        <taxon>Tracheophyta</taxon>
        <taxon>Spermatophyta</taxon>
        <taxon>Magnoliopsida</taxon>
        <taxon>eudicotyledons</taxon>
        <taxon>Gunneridae</taxon>
        <taxon>Pentapetalae</taxon>
        <taxon>rosids</taxon>
        <taxon>malvids</taxon>
        <taxon>Brassicales</taxon>
        <taxon>Brassicaceae</taxon>
        <taxon>Camelineae</taxon>
        <taxon>Arabidopsis</taxon>
    </lineage>
</organism>
<feature type="chain" id="PRO_0000097876" description="Sister chromatid cohesion 1 protein 2">
    <location>
        <begin position="1"/>
        <end position="810"/>
    </location>
</feature>
<feature type="region of interest" description="Disordered" evidence="2">
    <location>
        <begin position="200"/>
        <end position="244"/>
    </location>
</feature>
<feature type="region of interest" description="Disordered" evidence="2">
    <location>
        <begin position="273"/>
        <end position="315"/>
    </location>
</feature>
<feature type="region of interest" description="Disordered" evidence="2">
    <location>
        <begin position="606"/>
        <end position="626"/>
    </location>
</feature>
<feature type="compositionally biased region" description="Basic and acidic residues" evidence="2">
    <location>
        <begin position="220"/>
        <end position="234"/>
    </location>
</feature>
<feature type="compositionally biased region" description="Basic and acidic residues" evidence="2">
    <location>
        <begin position="273"/>
        <end position="310"/>
    </location>
</feature>
<feature type="compositionally biased region" description="Polar residues" evidence="2">
    <location>
        <begin position="606"/>
        <end position="622"/>
    </location>
</feature>
<feature type="splice variant" id="VSP_007493" description="In isoform 2." evidence="3 4">
    <location>
        <position position="716"/>
    </location>
</feature>
<feature type="sequence conflict" description="In Ref. 1; AAG44842." evidence="5" ref="1">
    <original>A</original>
    <variation>S</variation>
    <location>
        <position position="196"/>
    </location>
</feature>
<feature type="sequence conflict" description="In Ref. 1; AAG44842." evidence="5" ref="1">
    <original>E</original>
    <variation>K</variation>
    <location>
        <position position="303"/>
    </location>
</feature>
<feature type="sequence conflict" description="In Ref. 1; AAG44842." evidence="5" ref="1">
    <original>SLP</original>
    <variation>ALS</variation>
    <location>
        <begin position="309"/>
        <end position="311"/>
    </location>
</feature>
<feature type="sequence conflict" description="In Ref. 1; AAG44842." evidence="5" ref="1">
    <original>T</original>
    <variation>A</variation>
    <location>
        <position position="548"/>
    </location>
</feature>
<feature type="sequence conflict" description="In Ref. 1; AAG44842." evidence="5" ref="1">
    <original>V</original>
    <variation>A</variation>
    <location>
        <position position="645"/>
    </location>
</feature>
<feature type="sequence conflict" description="In Ref. 1; AAG44842." evidence="5" ref="1">
    <original>V</original>
    <variation>L</variation>
    <location>
        <position position="787"/>
    </location>
</feature>
<gene>
    <name type="primary">SYN2</name>
    <name type="ordered locus">At5g40840</name>
    <name type="ORF">MHK7.7</name>
</gene>
<reference key="1">
    <citation type="journal article" date="2001" name="Gene">
        <title>Cloning and characterization of two Arabidopsis genes that belong to the RAD21/REC8 family of chromosome cohesin proteins.</title>
        <authorList>
            <person name="Dong F."/>
            <person name="Cai X."/>
            <person name="Makaroff C.A."/>
        </authorList>
    </citation>
    <scope>NUCLEOTIDE SEQUENCE [MRNA] (ISOFORM 2)</scope>
    <source>
        <strain>cv. Wassilewskija</strain>
    </source>
</reference>
<reference key="2">
    <citation type="submission" date="2001-07" db="EMBL/GenBank/DDBJ databases">
        <title>Functional analysis of the three Arabidopsis RAD21 homologs.</title>
        <authorList>
            <person name="Costa-Nunes J.A."/>
            <person name="Bhatt A.M."/>
            <person name="Dickinson H.G."/>
        </authorList>
    </citation>
    <scope>NUCLEOTIDE SEQUENCE [MRNA] (ISOFORMS 1 AND 2)</scope>
    <source>
        <strain>cv. Columbia</strain>
    </source>
</reference>
<reference key="3">
    <citation type="journal article" date="1998" name="DNA Res.">
        <title>Structural analysis of Arabidopsis thaliana chromosome 5. V. Sequence features of the regions of 1,381,565 bp covered by twenty one physically assigned P1 and TAC clones.</title>
        <authorList>
            <person name="Kaneko T."/>
            <person name="Kotani H."/>
            <person name="Nakamura Y."/>
            <person name="Sato S."/>
            <person name="Asamizu E."/>
            <person name="Miyajima N."/>
            <person name="Tabata S."/>
        </authorList>
    </citation>
    <scope>NUCLEOTIDE SEQUENCE [LARGE SCALE GENOMIC DNA]</scope>
    <source>
        <strain>cv. Columbia</strain>
    </source>
</reference>
<reference key="4">
    <citation type="journal article" date="2017" name="Plant J.">
        <title>Araport11: a complete reannotation of the Arabidopsis thaliana reference genome.</title>
        <authorList>
            <person name="Cheng C.Y."/>
            <person name="Krishnakumar V."/>
            <person name="Chan A.P."/>
            <person name="Thibaud-Nissen F."/>
            <person name="Schobel S."/>
            <person name="Town C.D."/>
        </authorList>
    </citation>
    <scope>GENOME REANNOTATION</scope>
    <source>
        <strain>cv. Columbia</strain>
    </source>
</reference>
<sequence length="810" mass="91459">MFYSHCLVSRKGPLGAIWVAAYFFKKLKKSQVKATHIPSSVDQILQKELDALTYRVLAYLLLGVVRIYSKKVDFLFDDCNKALIGVKEFVAKERNREKTGVSLPASIECFSIALPERFELDAFDLGVLEDFHGGNVKPHEDITLKDGSQETERMDMYSMERFDMEEDLLFTFHETFSTNHNENKHESFAHDMELDAENVRDTTEEASVRVVEAEPLDSNEPSRDHQNASRHREDPESDDILLEPQMSEDIRIAQEEDTVRETICTIVQRLVDSHESSGDNLHRDGHTENLESEKTSKKTSCEEMQHDRSLPSECGIPEAIHGIEDQPSGATRINGEKEIPEMSTLEKPEPVSVTGSRDLQEGVEKCRDHNEAEMADFELFHGSHKEQSETSEVNLHGSEKGFLSDMTVSKDPSSEFNATDTPVTVTPKTPSRLKISEGGTSPQFSIIPTPAAKESSRVSRKRKCLIDDEVIIPNKVMKEMIEDSSKLLAKRRNVPHTDCPERRTKRFANPFRSFLEPLIQYGSSDLQSLFCQPIKLKNWATTGTPKDTKIARHKEKSSLDTVRSPGVILSSDQTENTQEIMETPQAAALAGLKVTAGNSNVVSVEMGASSTTSGTAHQTENAAETPVKPSVIAPETPVRTSEQTVIAPETPVVSEQVEIAPETPVRESMSKRFFKDPGTCYKKSRPASPFTSFEEHPSVYYVENRDLDTILMNDEQVNADERQDLQQETWSSRTRNVAKFLEKTFLEQREREEEEKVSLLQLCRGRTQKESARLFYETLVLKTKGYVEVKQNHPYSDVFLMRVSRPQKAC</sequence>
<comment type="function">
    <text>May be involved in sister chromatid cohesion during mitosis.</text>
</comment>
<comment type="subunit">
    <text evidence="1">Component of the cohesin complex.</text>
</comment>
<comment type="subcellular location">
    <subcellularLocation>
        <location>Nucleus</location>
    </subcellularLocation>
</comment>
<comment type="alternative products">
    <event type="alternative splicing"/>
    <isoform>
        <id>Q9FQ20-1</id>
        <name>1</name>
        <sequence type="displayed"/>
    </isoform>
    <isoform>
        <id>Q9FQ20-2</id>
        <name>2</name>
        <sequence type="described" ref="VSP_007493"/>
    </isoform>
</comment>
<comment type="tissue specificity">
    <text>Low expression in shoots, buds, siliques, leaves and roots. Found in, but not limited to, actively dividing cells: in procambium, protoderm and ground meristem in roots, and in shoot and floral meristems.</text>
</comment>
<comment type="miscellaneous">
    <molecule>Isoform 2</molecule>
    <text evidence="5">Intron 9 uses an acceptor splice site 3 nucleotides downstream of the one used in isoform 1.</text>
</comment>
<comment type="similarity">
    <text evidence="5">Belongs to the rad21 family.</text>
</comment>
<comment type="sequence caution" evidence="5">
    <conflict type="erroneous gene model prediction">
        <sequence resource="EMBL-CDS" id="BAB11346"/>
    </conflict>
</comment>
<name>SCC12_ARATH</name>
<keyword id="KW-0025">Alternative splicing</keyword>
<keyword id="KW-0131">Cell cycle</keyword>
<keyword id="KW-0132">Cell division</keyword>
<keyword id="KW-0159">Chromosome partition</keyword>
<keyword id="KW-0498">Mitosis</keyword>
<keyword id="KW-0539">Nucleus</keyword>
<keyword id="KW-1185">Reference proteome</keyword>